<proteinExistence type="evidence at transcript level"/>
<keyword id="KW-0274">FAD</keyword>
<keyword id="KW-0285">Flavoprotein</keyword>
<keyword id="KW-0503">Monooxygenase</keyword>
<keyword id="KW-0521">NADP</keyword>
<keyword id="KW-0560">Oxidoreductase</keyword>
<name>DEP4_ALTBR</name>
<sequence length="581" mass="66051">MESFDIVVVGAGWYGLMAARTYLELAPETNLLIVDDSSTVGGVWSKERIYPSLFAQISHPLFEYSFYPMPKDDISPDGFVSGKTIHNYLTSFTRDHNLLPRLRLNTRVERVRRGPSDAGGWVLDIKEGNPLLCHKLIYATGANSSPIIPTWPRQTFEQPVIHSLDLGKHQDYIAKSVETATVVGRSKSSYDAVYHLLCEGKRVNWVMRDGLSGPFSLYAPTFMGLWNIADHISTRFASSFSPCIMNTSGFCYNFLQRNAVGRTLTNVYWRAANYLSVSHAEYWRTPNAEKLRPRPYSDGVFWGSGGIGIATAPDFWKVFHRGNITIHSTEIDSLSHGDVVNLKNGYSLATDIVIHCTGFDKGYTTFDPELREELGLQYNSKSISRWSLLDAKAEQTVDELLPYLRTAPLQDMDPDASSRPEQGPNRHFRRLVVPELAARGDRSILFPGHIHSAFTPLAAELQALWGVSWMLGWRELPPQEEMELEAATFNAWTRKRYLEQGKKHSYFIYDYIPYIDTLMRDLGLNPYRKSSVFEEWFVRYKPSDYGTILDEYRDIRRLSLECLQGTGGFAERTNGHGVNMK</sequence>
<dbReference type="EC" id="1.-.-.-" evidence="5"/>
<dbReference type="EMBL" id="FJ977165">
    <property type="protein sequence ID" value="ACZ57547.1"/>
    <property type="molecule type" value="Genomic_DNA"/>
</dbReference>
<dbReference type="SMR" id="D2E9W9"/>
<dbReference type="PHI-base" id="PHI:2378"/>
<dbReference type="GO" id="GO:0004497">
    <property type="term" value="F:monooxygenase activity"/>
    <property type="evidence" value="ECO:0007669"/>
    <property type="project" value="UniProtKB-KW"/>
</dbReference>
<dbReference type="Gene3D" id="3.50.50.60">
    <property type="entry name" value="FAD/NAD(P)-binding domain"/>
    <property type="match status" value="1"/>
</dbReference>
<dbReference type="InterPro" id="IPR036188">
    <property type="entry name" value="FAD/NAD-bd_sf"/>
</dbReference>
<dbReference type="InterPro" id="IPR050346">
    <property type="entry name" value="FMO-like"/>
</dbReference>
<dbReference type="PANTHER" id="PTHR23023">
    <property type="entry name" value="DIMETHYLANILINE MONOOXYGENASE"/>
    <property type="match status" value="1"/>
</dbReference>
<dbReference type="Pfam" id="PF13738">
    <property type="entry name" value="Pyr_redox_3"/>
    <property type="match status" value="1"/>
</dbReference>
<dbReference type="SUPFAM" id="SSF51905">
    <property type="entry name" value="FAD/NAD(P)-binding domain"/>
    <property type="match status" value="2"/>
</dbReference>
<evidence type="ECO:0000250" key="1">
    <source>
        <dbReference type="UniProtKB" id="Q47PU3"/>
    </source>
</evidence>
<evidence type="ECO:0000269" key="2">
    <source>
    </source>
</evidence>
<evidence type="ECO:0000303" key="3">
    <source>
    </source>
</evidence>
<evidence type="ECO:0000305" key="4"/>
<evidence type="ECO:0000305" key="5">
    <source>
    </source>
</evidence>
<gene>
    <name evidence="3" type="primary">DEP4</name>
</gene>
<reference key="1">
    <citation type="journal article" date="2009" name="Mol. Plant Microbe Interact.">
        <title>Biosynthesis and role in virulence of the histone deacetylase inhibitor depudecin from Alternaria brassicicola.</title>
        <authorList>
            <person name="Wight W.D."/>
            <person name="Kim K.-H."/>
            <person name="Lawrence C.B."/>
            <person name="Walton J.D."/>
        </authorList>
    </citation>
    <scope>NUCLEOTIDE SEQUENCE [GENOMIC DNA]</scope>
    <scope>DISRUPTION PHENOTYPE</scope>
    <scope>FUNCTION</scope>
    <scope>INDUCTION</scope>
    <scope>PATHWAY</scope>
    <source>
        <strain>MUCL 202097</strain>
    </source>
</reference>
<protein>
    <recommendedName>
        <fullName evidence="3">FAD-dependent monooxygenase DEP4</fullName>
        <ecNumber evidence="5">1.-.-.-</ecNumber>
    </recommendedName>
    <alternativeName>
        <fullName evidence="3">Depudecin biosynthesis cluster protein 1</fullName>
    </alternativeName>
</protein>
<feature type="chain" id="PRO_0000441941" description="FAD-dependent monooxygenase DEP4">
    <location>
        <begin position="1"/>
        <end position="581"/>
    </location>
</feature>
<feature type="binding site" evidence="1">
    <location>
        <begin position="43"/>
        <end position="46"/>
    </location>
    <ligand>
        <name>FAD</name>
        <dbReference type="ChEBI" id="CHEBI:57692"/>
    </ligand>
</feature>
<feature type="binding site" evidence="1">
    <location>
        <begin position="54"/>
        <end position="56"/>
    </location>
    <ligand>
        <name>NADP(+)</name>
        <dbReference type="ChEBI" id="CHEBI:58349"/>
    </ligand>
</feature>
<feature type="binding site" evidence="1">
    <location>
        <position position="108"/>
    </location>
    <ligand>
        <name>FAD</name>
        <dbReference type="ChEBI" id="CHEBI:57692"/>
    </ligand>
</feature>
<feature type="binding site" evidence="1">
    <location>
        <begin position="183"/>
        <end position="202"/>
    </location>
    <ligand>
        <name>NADP(+)</name>
        <dbReference type="ChEBI" id="CHEBI:58349"/>
    </ligand>
</feature>
<feature type="binding site" evidence="1">
    <location>
        <begin position="219"/>
        <end position="220"/>
    </location>
    <ligand>
        <name>NADP(+)</name>
        <dbReference type="ChEBI" id="CHEBI:58349"/>
    </ligand>
</feature>
<feature type="binding site" evidence="1">
    <location>
        <begin position="351"/>
        <end position="352"/>
    </location>
    <ligand>
        <name>NADP(+)</name>
        <dbReference type="ChEBI" id="CHEBI:58349"/>
    </ligand>
</feature>
<feature type="binding site" evidence="1">
    <location>
        <position position="470"/>
    </location>
    <ligand>
        <name>FAD</name>
        <dbReference type="ChEBI" id="CHEBI:57692"/>
    </ligand>
</feature>
<accession>D2E9W9</accession>
<comment type="function">
    <text evidence="2">FAD-dependent monooxygenase; part of the gene cluster that mediates the biosynthesis of depudecin, a highly oxidized eleven-carbon linear polyketide that acts as a histone deacetylase (HDAC) inhibitor and makes a small contribution to pathogenesis (PubMed:19737099). The reducing polyketide synthase DEP5 is the central enzyme in depudecin biosynthesis by yielding the backbone polyketide chain (PubMed:19737099). The monooxygenases DEP2 and DEP4, as well as the uncharacterized protein DEP1, then act as tailoring enzymes to modify the intermediate polyketide chain into depudecin (PubMed:19737099).</text>
</comment>
<comment type="cofactor">
    <cofactor evidence="4">
        <name>FAD</name>
        <dbReference type="ChEBI" id="CHEBI:57692"/>
    </cofactor>
</comment>
<comment type="pathway">
    <text evidence="2">Polyketide biosynthesis.</text>
</comment>
<comment type="induction">
    <text evidence="2">Expression is positively regulated by the depudecin biosynthesis cluster-specific transcription activator DEP6 (PubMed:19737099).</text>
</comment>
<comment type="disruption phenotype">
    <text evidence="2">Impairs the production of depudecin and accumulates an epoxide-containing metabolite of slightly higher retention factor than native depudecin (PubMed:19737099).</text>
</comment>
<comment type="similarity">
    <text evidence="4">Belongs to the FAD-binding monooxygenase family.</text>
</comment>
<organism>
    <name type="scientific">Alternaria brassicicola</name>
    <name type="common">Dark leaf spot agent</name>
    <dbReference type="NCBI Taxonomy" id="29001"/>
    <lineage>
        <taxon>Eukaryota</taxon>
        <taxon>Fungi</taxon>
        <taxon>Dikarya</taxon>
        <taxon>Ascomycota</taxon>
        <taxon>Pezizomycotina</taxon>
        <taxon>Dothideomycetes</taxon>
        <taxon>Pleosporomycetidae</taxon>
        <taxon>Pleosporales</taxon>
        <taxon>Pleosporineae</taxon>
        <taxon>Pleosporaceae</taxon>
        <taxon>Alternaria</taxon>
        <taxon>Alternaria sect. Brassicicola</taxon>
    </lineage>
</organism>